<protein>
    <recommendedName>
        <fullName>Aminoacyl tRNA synthase complex-interacting multifunctional protein 1</fullName>
    </recommendedName>
    <alternativeName>
        <fullName>Multisynthase complex auxiliary component p43</fullName>
    </alternativeName>
    <component>
        <recommendedName>
            <fullName>Endothelial monocyte-activating polypeptide 2</fullName>
        </recommendedName>
        <alternativeName>
            <fullName>EMAP-II</fullName>
        </alternativeName>
        <alternativeName>
            <fullName>Small inducible cytokine subfamily E member 1</fullName>
        </alternativeName>
    </component>
</protein>
<reference key="1">
    <citation type="journal article" date="1997" name="J. Biol. Chem.">
        <title>The p43 component of the mammalian multi-synthetase complex is likely to be the precursor of the endothelial monocyte-activating polypeptide II cytokine.</title>
        <authorList>
            <person name="Quevillon S."/>
            <person name="Agou F."/>
            <person name="Robinson J.-C."/>
            <person name="Mirande M."/>
        </authorList>
    </citation>
    <scope>NUCLEOTIDE SEQUENCE [MRNA]</scope>
</reference>
<feature type="chain" id="PRO_0000223393" description="Aminoacyl tRNA synthase complex-interacting multifunctional protein 1">
    <location>
        <begin position="1"/>
        <end position="359"/>
    </location>
</feature>
<feature type="chain" id="PRO_0000019240" description="Endothelial monocyte-activating polypeptide 2">
    <location>
        <begin position="194"/>
        <end position="359"/>
    </location>
</feature>
<feature type="domain" description="tRNA-binding" evidence="4">
    <location>
        <begin position="198"/>
        <end position="299"/>
    </location>
</feature>
<feature type="region of interest" description="Required for fibroblast proliferation" evidence="1">
    <location>
        <begin position="52"/>
        <end position="92"/>
    </location>
</feature>
<feature type="region of interest" description="Interaction with HSP90B1" evidence="1">
    <location>
        <begin position="100"/>
        <end position="241"/>
    </location>
</feature>
<feature type="region of interest" description="Required for endothelial cell death" evidence="1">
    <location>
        <begin position="149"/>
        <end position="163"/>
    </location>
</feature>
<feature type="region of interest" description="Disordered" evidence="5">
    <location>
        <begin position="156"/>
        <end position="196"/>
    </location>
</feature>
<feature type="region of interest" description="Required for endothelial cell migration" evidence="1">
    <location>
        <begin position="163"/>
        <end position="239"/>
    </location>
</feature>
<feature type="compositionally biased region" description="Basic and acidic residues" evidence="5">
    <location>
        <begin position="157"/>
        <end position="185"/>
    </location>
</feature>
<feature type="modified residue" description="Phosphoserine" evidence="3">
    <location>
        <position position="187"/>
    </location>
</feature>
<feature type="modified residue" description="N6-succinyllysine" evidence="2">
    <location>
        <position position="316"/>
    </location>
</feature>
<feature type="cross-link" description="Glycyl lysine isopeptide (Lys-Gly) (interchain with G-Cter in SUMO1)" evidence="3">
    <location>
        <position position="184"/>
    </location>
</feature>
<dbReference type="EMBL" id="AF021800">
    <property type="protein sequence ID" value="AAB95207.1"/>
    <property type="molecule type" value="mRNA"/>
</dbReference>
<dbReference type="RefSeq" id="NP_001231196.1">
    <property type="nucleotide sequence ID" value="NM_001244267.1"/>
</dbReference>
<dbReference type="SMR" id="O54873"/>
<dbReference type="PaxDb" id="10029-NP_001231196.1"/>
<dbReference type="GeneID" id="100689238"/>
<dbReference type="KEGG" id="cge:100689238"/>
<dbReference type="CTD" id="9255"/>
<dbReference type="eggNOG" id="KOG2241">
    <property type="taxonomic scope" value="Eukaryota"/>
</dbReference>
<dbReference type="OrthoDB" id="197206at2759"/>
<dbReference type="Proteomes" id="UP000694386">
    <property type="component" value="Unplaced"/>
</dbReference>
<dbReference type="Proteomes" id="UP001108280">
    <property type="component" value="Chromosome 1"/>
</dbReference>
<dbReference type="GO" id="GO:0017101">
    <property type="term" value="C:aminoacyl-tRNA synthetase multienzyme complex"/>
    <property type="evidence" value="ECO:0000250"/>
    <property type="project" value="UniProtKB"/>
</dbReference>
<dbReference type="GO" id="GO:0005829">
    <property type="term" value="C:cytosol"/>
    <property type="evidence" value="ECO:0007669"/>
    <property type="project" value="UniProtKB-SubCell"/>
</dbReference>
<dbReference type="GO" id="GO:0005783">
    <property type="term" value="C:endoplasmic reticulum"/>
    <property type="evidence" value="ECO:0007669"/>
    <property type="project" value="UniProtKB-SubCell"/>
</dbReference>
<dbReference type="GO" id="GO:0005615">
    <property type="term" value="C:extracellular space"/>
    <property type="evidence" value="ECO:0000250"/>
    <property type="project" value="UniProtKB"/>
</dbReference>
<dbReference type="GO" id="GO:0005794">
    <property type="term" value="C:Golgi apparatus"/>
    <property type="evidence" value="ECO:0007669"/>
    <property type="project" value="UniProtKB-SubCell"/>
</dbReference>
<dbReference type="GO" id="GO:0005634">
    <property type="term" value="C:nucleus"/>
    <property type="evidence" value="ECO:0007669"/>
    <property type="project" value="UniProtKB-SubCell"/>
</dbReference>
<dbReference type="GO" id="GO:0005125">
    <property type="term" value="F:cytokine activity"/>
    <property type="evidence" value="ECO:0007669"/>
    <property type="project" value="UniProtKB-KW"/>
</dbReference>
<dbReference type="GO" id="GO:0000049">
    <property type="term" value="F:tRNA binding"/>
    <property type="evidence" value="ECO:0007669"/>
    <property type="project" value="UniProtKB-KW"/>
</dbReference>
<dbReference type="GO" id="GO:0001525">
    <property type="term" value="P:angiogenesis"/>
    <property type="evidence" value="ECO:0007669"/>
    <property type="project" value="UniProtKB-KW"/>
</dbReference>
<dbReference type="GO" id="GO:0006915">
    <property type="term" value="P:apoptotic process"/>
    <property type="evidence" value="ECO:0007669"/>
    <property type="project" value="UniProtKB-KW"/>
</dbReference>
<dbReference type="GO" id="GO:0006954">
    <property type="term" value="P:inflammatory response"/>
    <property type="evidence" value="ECO:0007669"/>
    <property type="project" value="UniProtKB-KW"/>
</dbReference>
<dbReference type="GO" id="GO:0070094">
    <property type="term" value="P:positive regulation of glucagon secretion"/>
    <property type="evidence" value="ECO:0000250"/>
    <property type="project" value="UniProtKB"/>
</dbReference>
<dbReference type="GO" id="GO:0006412">
    <property type="term" value="P:translation"/>
    <property type="evidence" value="ECO:0007669"/>
    <property type="project" value="UniProtKB-KW"/>
</dbReference>
<dbReference type="CDD" id="cd02799">
    <property type="entry name" value="tRNA_bind_EMAP-II_like"/>
    <property type="match status" value="1"/>
</dbReference>
<dbReference type="FunFam" id="2.40.50.140:FF:000047">
    <property type="entry name" value="tyrosine--tRNA ligase, cytoplasmic isoform X2"/>
    <property type="match status" value="1"/>
</dbReference>
<dbReference type="Gene3D" id="2.40.50.140">
    <property type="entry name" value="Nucleic acid-binding proteins"/>
    <property type="match status" value="1"/>
</dbReference>
<dbReference type="InterPro" id="IPR012340">
    <property type="entry name" value="NA-bd_OB-fold"/>
</dbReference>
<dbReference type="InterPro" id="IPR002547">
    <property type="entry name" value="tRNA-bd_dom"/>
</dbReference>
<dbReference type="InterPro" id="IPR051270">
    <property type="entry name" value="Tyrosine-tRNA_ligase_regulator"/>
</dbReference>
<dbReference type="PANTHER" id="PTHR11586:SF33">
    <property type="entry name" value="AMINOACYL TRNA SYNTHASE COMPLEX-INTERACTING MULTIFUNCTIONAL PROTEIN 1"/>
    <property type="match status" value="1"/>
</dbReference>
<dbReference type="PANTHER" id="PTHR11586">
    <property type="entry name" value="TRNA-AMINOACYLATION COFACTOR ARC1 FAMILY MEMBER"/>
    <property type="match status" value="1"/>
</dbReference>
<dbReference type="Pfam" id="PF01588">
    <property type="entry name" value="tRNA_bind"/>
    <property type="match status" value="1"/>
</dbReference>
<dbReference type="SUPFAM" id="SSF50249">
    <property type="entry name" value="Nucleic acid-binding proteins"/>
    <property type="match status" value="1"/>
</dbReference>
<dbReference type="PROSITE" id="PS50886">
    <property type="entry name" value="TRBD"/>
    <property type="match status" value="1"/>
</dbReference>
<gene>
    <name type="primary">AIMP1</name>
    <name type="synonym">SCYE1</name>
</gene>
<accession>O54873</accession>
<keyword id="KW-0037">Angiogenesis</keyword>
<keyword id="KW-0053">Apoptosis</keyword>
<keyword id="KW-0202">Cytokine</keyword>
<keyword id="KW-0963">Cytoplasm</keyword>
<keyword id="KW-0256">Endoplasmic reticulum</keyword>
<keyword id="KW-0333">Golgi apparatus</keyword>
<keyword id="KW-0395">Inflammatory response</keyword>
<keyword id="KW-1017">Isopeptide bond</keyword>
<keyword id="KW-0539">Nucleus</keyword>
<keyword id="KW-0597">Phosphoprotein</keyword>
<keyword id="KW-0648">Protein biosynthesis</keyword>
<keyword id="KW-0694">RNA-binding</keyword>
<keyword id="KW-0964">Secreted</keyword>
<keyword id="KW-0820">tRNA-binding</keyword>
<keyword id="KW-0832">Ubl conjugation</keyword>
<name>AIMP1_CRIGR</name>
<organism>
    <name type="scientific">Cricetulus griseus</name>
    <name type="common">Chinese hamster</name>
    <name type="synonym">Cricetulus barabensis griseus</name>
    <dbReference type="NCBI Taxonomy" id="10029"/>
    <lineage>
        <taxon>Eukaryota</taxon>
        <taxon>Metazoa</taxon>
        <taxon>Chordata</taxon>
        <taxon>Craniata</taxon>
        <taxon>Vertebrata</taxon>
        <taxon>Euteleostomi</taxon>
        <taxon>Mammalia</taxon>
        <taxon>Eutheria</taxon>
        <taxon>Euarchontoglires</taxon>
        <taxon>Glires</taxon>
        <taxon>Rodentia</taxon>
        <taxon>Myomorpha</taxon>
        <taxon>Muroidea</taxon>
        <taxon>Cricetidae</taxon>
        <taxon>Cricetinae</taxon>
        <taxon>Cricetulus</taxon>
    </lineage>
</organism>
<proteinExistence type="evidence at transcript level"/>
<comment type="function">
    <text evidence="2 3">Non-catalytic component of the multisynthase complex. Stimulates the catalytic activity of cytoplasmic arginyl-tRNA synthase. Binds tRNA. Possesses inflammatory cytokine activity. Negatively regulates TGF-beta signaling through stabilization of SMURF2 by binding to SMURF2 and inhibiting its SMAD7-mediated degradation. Involved in glucose homeostasis through induction of glucagon secretion at low glucose levels. Promotes dermal fibroblast proliferation and wound repair. Regulates KDELR1-mediated retention of HSP90B1/gp96 in the endoplasmic reticulum. Plays a role in angiogenesis by inducing endothelial cell migration at low concentrations and endothelian cell apoptosis at high concentrations. Induces maturation of dendritic cells and monocyte cell adhesion.</text>
</comment>
<comment type="subunit">
    <text evidence="2 3">Homodimer. Part of the multisynthetase complex (MSC), a multisubunit complex that groups tRNA ligases for Arg (RARS1), Asp (DARS1), Gln (QARS1), Ile (IARS1), Leu (LARS1), Lys (KARS1), Met (MARS1) the bifunctional ligase for Glu and Pro (EPRS1) and the auxiliary subunits AIMP1/p43, AIMP2/p38 and EEF1E1/p18. Interacts (via N-terminus) with RARS1 (via N-terminus). Part of a complex composed of RARS1, QARS1 and AIMP1. Interacts (via C-terminus) with SMURF2. Interacts (via N-terminus) with HSP90B1/gp96 (via C-terminus). Interacts with PSMA7. Interacts with TARS3.</text>
</comment>
<comment type="subcellular location">
    <subcellularLocation>
        <location evidence="3">Nucleus</location>
    </subcellularLocation>
    <subcellularLocation>
        <location evidence="3">Cytoplasm</location>
        <location evidence="3">Cytosol</location>
    </subcellularLocation>
    <subcellularLocation>
        <location evidence="2">Secreted</location>
    </subcellularLocation>
    <subcellularLocation>
        <location evidence="2">Endoplasmic reticulum</location>
    </subcellularLocation>
    <subcellularLocation>
        <location evidence="2">Golgi apparatus</location>
    </subcellularLocation>
    <text evidence="2 3">Enriched in secretory vesicles of pancreatic alpha cells and secreted from the pancreas in response to low glucose levels. Secreted in response to hypoxia. Also secreted in response to both apoptotic and necrotic cell death.</text>
</comment>
<comment type="PTM">
    <text evidence="2">Cleaved by caspase-7 in response to apoptosis to produce EMAP-II.</text>
</comment>
<sequence>MCEVFRRLPGTAPGSSPPAPATHRLRLLGRELRVRRFMIFCRFWAKMATNDAVLKRLEQKGAEADQIIEYLKQQVALLKEKAVLQATLREEKKLRVENAKLKKEIEELKQELIQAEIQNGVKQIPVPVQSDTPVQASSAVSTSVIQSTSVSTISCSIKEHSKGGGEEKKVKEKTDKKGEKKEKKLQSAAPSADSKPVDVSRLDLRIGRIVTVKKHPDADSLYVEEVDVGEAAPRTVISGLVNHVPLDQMQNRMVVLLCNLKPAKMRGILSQAMVMCASSPEKVEILAPPNGSVPGDRITFDAFPGEPDKELNPKKKIWEQIQPDLHTNAECVATYKGSPFEVKGKGVCRAQTMANSGIK</sequence>
<evidence type="ECO:0000250" key="1"/>
<evidence type="ECO:0000250" key="2">
    <source>
        <dbReference type="UniProtKB" id="P31230"/>
    </source>
</evidence>
<evidence type="ECO:0000250" key="3">
    <source>
        <dbReference type="UniProtKB" id="Q12904"/>
    </source>
</evidence>
<evidence type="ECO:0000255" key="4">
    <source>
        <dbReference type="PROSITE-ProRule" id="PRU00209"/>
    </source>
</evidence>
<evidence type="ECO:0000256" key="5">
    <source>
        <dbReference type="SAM" id="MobiDB-lite"/>
    </source>
</evidence>